<dbReference type="EMBL" id="AM039952">
    <property type="protein sequence ID" value="CAJ25502.1"/>
    <property type="molecule type" value="Genomic_DNA"/>
</dbReference>
<dbReference type="RefSeq" id="WP_003483999.1">
    <property type="nucleotide sequence ID" value="NZ_CP017190.1"/>
</dbReference>
<dbReference type="SMR" id="Q3BP11"/>
<dbReference type="STRING" id="456327.BJD11_03810"/>
<dbReference type="KEGG" id="xcv:XCV3771"/>
<dbReference type="eggNOG" id="COG0711">
    <property type="taxonomic scope" value="Bacteria"/>
</dbReference>
<dbReference type="HOGENOM" id="CLU_079215_4_5_6"/>
<dbReference type="Proteomes" id="UP000007069">
    <property type="component" value="Chromosome"/>
</dbReference>
<dbReference type="GO" id="GO:0005886">
    <property type="term" value="C:plasma membrane"/>
    <property type="evidence" value="ECO:0007669"/>
    <property type="project" value="UniProtKB-SubCell"/>
</dbReference>
<dbReference type="GO" id="GO:0045259">
    <property type="term" value="C:proton-transporting ATP synthase complex"/>
    <property type="evidence" value="ECO:0007669"/>
    <property type="project" value="UniProtKB-KW"/>
</dbReference>
<dbReference type="GO" id="GO:0046933">
    <property type="term" value="F:proton-transporting ATP synthase activity, rotational mechanism"/>
    <property type="evidence" value="ECO:0007669"/>
    <property type="project" value="UniProtKB-UniRule"/>
</dbReference>
<dbReference type="GO" id="GO:0046961">
    <property type="term" value="F:proton-transporting ATPase activity, rotational mechanism"/>
    <property type="evidence" value="ECO:0007669"/>
    <property type="project" value="TreeGrafter"/>
</dbReference>
<dbReference type="CDD" id="cd06503">
    <property type="entry name" value="ATP-synt_Fo_b"/>
    <property type="match status" value="1"/>
</dbReference>
<dbReference type="Gene3D" id="6.10.250.1580">
    <property type="match status" value="1"/>
</dbReference>
<dbReference type="HAMAP" id="MF_01398">
    <property type="entry name" value="ATP_synth_b_bprime"/>
    <property type="match status" value="1"/>
</dbReference>
<dbReference type="InterPro" id="IPR028987">
    <property type="entry name" value="ATP_synth_B-like_membr_sf"/>
</dbReference>
<dbReference type="InterPro" id="IPR002146">
    <property type="entry name" value="ATP_synth_b/b'su_bac/chlpt"/>
</dbReference>
<dbReference type="InterPro" id="IPR005864">
    <property type="entry name" value="ATP_synth_F0_bsu_bac"/>
</dbReference>
<dbReference type="InterPro" id="IPR050059">
    <property type="entry name" value="ATP_synthase_B_chain"/>
</dbReference>
<dbReference type="NCBIfam" id="TIGR01144">
    <property type="entry name" value="ATP_synt_b"/>
    <property type="match status" value="1"/>
</dbReference>
<dbReference type="NCBIfam" id="NF004411">
    <property type="entry name" value="PRK05759.1-2"/>
    <property type="match status" value="1"/>
</dbReference>
<dbReference type="PANTHER" id="PTHR33445:SF1">
    <property type="entry name" value="ATP SYNTHASE SUBUNIT B"/>
    <property type="match status" value="1"/>
</dbReference>
<dbReference type="PANTHER" id="PTHR33445">
    <property type="entry name" value="ATP SYNTHASE SUBUNIT B', CHLOROPLASTIC"/>
    <property type="match status" value="1"/>
</dbReference>
<dbReference type="Pfam" id="PF00430">
    <property type="entry name" value="ATP-synt_B"/>
    <property type="match status" value="1"/>
</dbReference>
<dbReference type="SUPFAM" id="SSF81573">
    <property type="entry name" value="F1F0 ATP synthase subunit B, membrane domain"/>
    <property type="match status" value="1"/>
</dbReference>
<feature type="chain" id="PRO_0000368870" description="ATP synthase subunit b">
    <location>
        <begin position="1"/>
        <end position="156"/>
    </location>
</feature>
<feature type="transmembrane region" description="Helical" evidence="1">
    <location>
        <begin position="3"/>
        <end position="23"/>
    </location>
</feature>
<protein>
    <recommendedName>
        <fullName evidence="1">ATP synthase subunit b</fullName>
    </recommendedName>
    <alternativeName>
        <fullName evidence="1">ATP synthase F(0) sector subunit b</fullName>
    </alternativeName>
    <alternativeName>
        <fullName evidence="1">ATPase subunit I</fullName>
    </alternativeName>
    <alternativeName>
        <fullName evidence="1">F-type ATPase subunit b</fullName>
        <shortName evidence="1">F-ATPase subunit b</shortName>
    </alternativeName>
</protein>
<keyword id="KW-0066">ATP synthesis</keyword>
<keyword id="KW-0997">Cell inner membrane</keyword>
<keyword id="KW-1003">Cell membrane</keyword>
<keyword id="KW-0138">CF(0)</keyword>
<keyword id="KW-0375">Hydrogen ion transport</keyword>
<keyword id="KW-0406">Ion transport</keyword>
<keyword id="KW-0472">Membrane</keyword>
<keyword id="KW-0812">Transmembrane</keyword>
<keyword id="KW-1133">Transmembrane helix</keyword>
<keyword id="KW-0813">Transport</keyword>
<organism>
    <name type="scientific">Xanthomonas euvesicatoria pv. vesicatoria (strain 85-10)</name>
    <name type="common">Xanthomonas campestris pv. vesicatoria</name>
    <dbReference type="NCBI Taxonomy" id="316273"/>
    <lineage>
        <taxon>Bacteria</taxon>
        <taxon>Pseudomonadati</taxon>
        <taxon>Pseudomonadota</taxon>
        <taxon>Gammaproteobacteria</taxon>
        <taxon>Lysobacterales</taxon>
        <taxon>Lysobacteraceae</taxon>
        <taxon>Xanthomonas</taxon>
    </lineage>
</organism>
<proteinExistence type="inferred from homology"/>
<reference key="1">
    <citation type="journal article" date="2005" name="J. Bacteriol.">
        <title>Insights into genome plasticity and pathogenicity of the plant pathogenic Bacterium Xanthomonas campestris pv. vesicatoria revealed by the complete genome sequence.</title>
        <authorList>
            <person name="Thieme F."/>
            <person name="Koebnik R."/>
            <person name="Bekel T."/>
            <person name="Berger C."/>
            <person name="Boch J."/>
            <person name="Buettner D."/>
            <person name="Caldana C."/>
            <person name="Gaigalat L."/>
            <person name="Goesmann A."/>
            <person name="Kay S."/>
            <person name="Kirchner O."/>
            <person name="Lanz C."/>
            <person name="Linke B."/>
            <person name="McHardy A.C."/>
            <person name="Meyer F."/>
            <person name="Mittenhuber G."/>
            <person name="Nies D.H."/>
            <person name="Niesbach-Kloesgen U."/>
            <person name="Patschkowski T."/>
            <person name="Rueckert C."/>
            <person name="Rupp O."/>
            <person name="Schneiker S."/>
            <person name="Schuster S.C."/>
            <person name="Vorhoelter F.J."/>
            <person name="Weber E."/>
            <person name="Puehler A."/>
            <person name="Bonas U."/>
            <person name="Bartels D."/>
            <person name="Kaiser O."/>
        </authorList>
    </citation>
    <scope>NUCLEOTIDE SEQUENCE [LARGE SCALE GENOMIC DNA]</scope>
    <source>
        <strain>85-10</strain>
    </source>
</reference>
<evidence type="ECO:0000255" key="1">
    <source>
        <dbReference type="HAMAP-Rule" id="MF_01398"/>
    </source>
</evidence>
<name>ATPF_XANE5</name>
<comment type="function">
    <text evidence="1">F(1)F(0) ATP synthase produces ATP from ADP in the presence of a proton or sodium gradient. F-type ATPases consist of two structural domains, F(1) containing the extramembraneous catalytic core and F(0) containing the membrane proton channel, linked together by a central stalk and a peripheral stalk. During catalysis, ATP synthesis in the catalytic domain of F(1) is coupled via a rotary mechanism of the central stalk subunits to proton translocation.</text>
</comment>
<comment type="function">
    <text evidence="1">Component of the F(0) channel, it forms part of the peripheral stalk, linking F(1) to F(0).</text>
</comment>
<comment type="subunit">
    <text evidence="1">F-type ATPases have 2 components, F(1) - the catalytic core - and F(0) - the membrane proton channel. F(1) has five subunits: alpha(3), beta(3), gamma(1), delta(1), epsilon(1). F(0) has three main subunits: a(1), b(2) and c(10-14). The alpha and beta chains form an alternating ring which encloses part of the gamma chain. F(1) is attached to F(0) by a central stalk formed by the gamma and epsilon chains, while a peripheral stalk is formed by the delta and b chains.</text>
</comment>
<comment type="subcellular location">
    <subcellularLocation>
        <location evidence="1">Cell inner membrane</location>
        <topology evidence="1">Single-pass membrane protein</topology>
    </subcellularLocation>
</comment>
<comment type="similarity">
    <text evidence="1">Belongs to the ATPase B chain family.</text>
</comment>
<sequence length="156" mass="17098">MDITLTIFAQALAFAGLIWIVATKIWPPLLQAIEERQQKIAEGLAAADRSQKDLAQAQEKVNEALKDARTKANEIIDQAHARANQIIEAAKLEAIAEANRQKDLAQTEIDASATRAREELRKQVSVLAVSGAEKLLKREIDANAHKALLDELAAEI</sequence>
<gene>
    <name evidence="1" type="primary">atpF</name>
    <name type="ordered locus">XCV3771</name>
</gene>
<accession>Q3BP11</accession>